<dbReference type="EC" id="3.2.1.-"/>
<dbReference type="EMBL" id="AE004091">
    <property type="protein sequence ID" value="AAG04474.1"/>
    <property type="molecule type" value="Genomic_DNA"/>
</dbReference>
<dbReference type="PIR" id="C83511">
    <property type="entry name" value="C83511"/>
</dbReference>
<dbReference type="RefSeq" id="NP_249776.1">
    <property type="nucleotide sequence ID" value="NC_002516.2"/>
</dbReference>
<dbReference type="RefSeq" id="WP_003112508.1">
    <property type="nucleotide sequence ID" value="NZ_QZGE01000006.1"/>
</dbReference>
<dbReference type="SMR" id="Q9I4P4"/>
<dbReference type="FunCoup" id="Q9I4P4">
    <property type="interactions" value="77"/>
</dbReference>
<dbReference type="STRING" id="208964.PA1085"/>
<dbReference type="CAZy" id="GH73">
    <property type="family name" value="Glycoside Hydrolase Family 73"/>
</dbReference>
<dbReference type="PaxDb" id="208964-PA1085"/>
<dbReference type="GeneID" id="878578"/>
<dbReference type="KEGG" id="pae:PA1085"/>
<dbReference type="PATRIC" id="fig|208964.12.peg.1124"/>
<dbReference type="PseudoCAP" id="PA1085"/>
<dbReference type="HOGENOM" id="CLU_013771_3_0_6"/>
<dbReference type="InParanoid" id="Q9I4P4"/>
<dbReference type="OrthoDB" id="289937at2"/>
<dbReference type="PhylomeDB" id="Q9I4P4"/>
<dbReference type="BioCyc" id="PAER208964:G1FZ6-1108-MONOMER"/>
<dbReference type="Proteomes" id="UP000002438">
    <property type="component" value="Chromosome"/>
</dbReference>
<dbReference type="GO" id="GO:0042597">
    <property type="term" value="C:periplasmic space"/>
    <property type="evidence" value="ECO:0007669"/>
    <property type="project" value="UniProtKB-SubCell"/>
</dbReference>
<dbReference type="GO" id="GO:0004040">
    <property type="term" value="F:amidase activity"/>
    <property type="evidence" value="ECO:0007669"/>
    <property type="project" value="InterPro"/>
</dbReference>
<dbReference type="GO" id="GO:0016798">
    <property type="term" value="F:hydrolase activity, acting on glycosyl bonds"/>
    <property type="evidence" value="ECO:0007669"/>
    <property type="project" value="UniProtKB-KW"/>
</dbReference>
<dbReference type="GO" id="GO:0044780">
    <property type="term" value="P:bacterial-type flagellum assembly"/>
    <property type="evidence" value="ECO:0007669"/>
    <property type="project" value="InterPro"/>
</dbReference>
<dbReference type="GO" id="GO:0071973">
    <property type="term" value="P:bacterial-type flagellum-dependent cell motility"/>
    <property type="evidence" value="ECO:0000318"/>
    <property type="project" value="GO_Central"/>
</dbReference>
<dbReference type="GO" id="GO:0071555">
    <property type="term" value="P:cell wall organization"/>
    <property type="evidence" value="ECO:0007669"/>
    <property type="project" value="UniProtKB-KW"/>
</dbReference>
<dbReference type="FunFam" id="2.10.70.40:FF:000001">
    <property type="entry name" value="Flagellar assembly peptidoglycan hydrolase FlgJ"/>
    <property type="match status" value="1"/>
</dbReference>
<dbReference type="Gene3D" id="1.10.530.10">
    <property type="match status" value="1"/>
</dbReference>
<dbReference type="Gene3D" id="2.10.70.40">
    <property type="entry name" value="peptidoglycan hydrolase"/>
    <property type="match status" value="1"/>
</dbReference>
<dbReference type="InterPro" id="IPR019301">
    <property type="entry name" value="Flagellar_prot_FlgJ_N"/>
</dbReference>
<dbReference type="InterPro" id="IPR013377">
    <property type="entry name" value="FlgJ"/>
</dbReference>
<dbReference type="InterPro" id="IPR051056">
    <property type="entry name" value="Glycosyl_Hydrolase_73"/>
</dbReference>
<dbReference type="InterPro" id="IPR023346">
    <property type="entry name" value="Lysozyme-like_dom_sf"/>
</dbReference>
<dbReference type="InterPro" id="IPR002901">
    <property type="entry name" value="MGlyc_endo_b_GlcNAc-like_dom"/>
</dbReference>
<dbReference type="NCBIfam" id="TIGR02541">
    <property type="entry name" value="flagell_FlgJ"/>
    <property type="match status" value="1"/>
</dbReference>
<dbReference type="PANTHER" id="PTHR33308">
    <property type="entry name" value="PEPTIDOGLYCAN HYDROLASE FLGJ"/>
    <property type="match status" value="1"/>
</dbReference>
<dbReference type="PANTHER" id="PTHR33308:SF9">
    <property type="entry name" value="PEPTIDOGLYCAN HYDROLASE FLGJ"/>
    <property type="match status" value="1"/>
</dbReference>
<dbReference type="Pfam" id="PF01832">
    <property type="entry name" value="Glucosaminidase"/>
    <property type="match status" value="1"/>
</dbReference>
<dbReference type="Pfam" id="PF10135">
    <property type="entry name" value="Rod-binding"/>
    <property type="match status" value="1"/>
</dbReference>
<dbReference type="SMART" id="SM00047">
    <property type="entry name" value="LYZ2"/>
    <property type="match status" value="1"/>
</dbReference>
<dbReference type="SUPFAM" id="SSF53955">
    <property type="entry name" value="Lysozyme-like"/>
    <property type="match status" value="1"/>
</dbReference>
<name>FLGJ_PSEAE</name>
<feature type="chain" id="PRO_0000165707" description="Peptidoglycan hydrolase FlgJ">
    <location>
        <begin position="1"/>
        <end position="400"/>
    </location>
</feature>
<feature type="region of interest" description="Disordered" evidence="3">
    <location>
        <begin position="112"/>
        <end position="155"/>
    </location>
</feature>
<feature type="region of interest" description="Disordered" evidence="3">
    <location>
        <begin position="204"/>
        <end position="229"/>
    </location>
</feature>
<feature type="region of interest" description="Catalytic">
    <location>
        <begin position="238"/>
        <end position="400"/>
    </location>
</feature>
<feature type="active site" evidence="2">
    <location>
        <position position="310"/>
    </location>
</feature>
<feature type="active site" evidence="2">
    <location>
        <position position="335"/>
    </location>
</feature>
<protein>
    <recommendedName>
        <fullName>Peptidoglycan hydrolase FlgJ</fullName>
        <ecNumber>3.2.1.-</ecNumber>
    </recommendedName>
    <alternativeName>
        <fullName>Muramidase FlgJ</fullName>
    </alternativeName>
</protein>
<proteinExistence type="inferred from homology"/>
<sequence>MDSRLLSGIGAGPDSGSYTDLNRLNQLKVGKDRDGEANIRKVAQEFESLFLNEMLKSMRSANEALGDGNFMNSQTTKQYQDMYDQQLSVSLSKNAGGIGLADVLVRQLSKMKQGSRGNGENPFARVAENGAGRWPSNPSAQAGKALPMPEAGRDDSKLLNQRRLALPGKLAERMLAGIVPSASPAASQMQSLGQDSYLPAQSYPAASRRGFSTDGVDSQGSRRIAQPPLARGKSMFASADEFIATMLPMAQKAAERIGVDARYLVAQAALETGWGKSIIRQQDGGSSHNLFGIKTGSRWDGASARALTTEYEGGKAVKEIAAFRSYSSFEQSFHDYVSFLQGNDRYQNALDSAANPERFMQELQRAGYATDPQYARKVAQIARQMQTYQAVAAAGTPPLG</sequence>
<organism>
    <name type="scientific">Pseudomonas aeruginosa (strain ATCC 15692 / DSM 22644 / CIP 104116 / JCM 14847 / LMG 12228 / 1C / PRS 101 / PAO1)</name>
    <dbReference type="NCBI Taxonomy" id="208964"/>
    <lineage>
        <taxon>Bacteria</taxon>
        <taxon>Pseudomonadati</taxon>
        <taxon>Pseudomonadota</taxon>
        <taxon>Gammaproteobacteria</taxon>
        <taxon>Pseudomonadales</taxon>
        <taxon>Pseudomonadaceae</taxon>
        <taxon>Pseudomonas</taxon>
    </lineage>
</organism>
<accession>Q9I4P4</accession>
<reference key="1">
    <citation type="journal article" date="2000" name="Nature">
        <title>Complete genome sequence of Pseudomonas aeruginosa PAO1, an opportunistic pathogen.</title>
        <authorList>
            <person name="Stover C.K."/>
            <person name="Pham X.-Q.T."/>
            <person name="Erwin A.L."/>
            <person name="Mizoguchi S.D."/>
            <person name="Warrener P."/>
            <person name="Hickey M.J."/>
            <person name="Brinkman F.S.L."/>
            <person name="Hufnagle W.O."/>
            <person name="Kowalik D.J."/>
            <person name="Lagrou M."/>
            <person name="Garber R.L."/>
            <person name="Goltry L."/>
            <person name="Tolentino E."/>
            <person name="Westbrock-Wadman S."/>
            <person name="Yuan Y."/>
            <person name="Brody L.L."/>
            <person name="Coulter S.N."/>
            <person name="Folger K.R."/>
            <person name="Kas A."/>
            <person name="Larbig K."/>
            <person name="Lim R.M."/>
            <person name="Smith K.A."/>
            <person name="Spencer D.H."/>
            <person name="Wong G.K.-S."/>
            <person name="Wu Z."/>
            <person name="Paulsen I.T."/>
            <person name="Reizer J."/>
            <person name="Saier M.H. Jr."/>
            <person name="Hancock R.E.W."/>
            <person name="Lory S."/>
            <person name="Olson M.V."/>
        </authorList>
    </citation>
    <scope>NUCLEOTIDE SEQUENCE [LARGE SCALE GENOMIC DNA]</scope>
    <source>
        <strain>ATCC 15692 / DSM 22644 / CIP 104116 / JCM 14847 / LMG 12228 / 1C / PRS 101 / PAO1</strain>
    </source>
</reference>
<keyword id="KW-1005">Bacterial flagellum biogenesis</keyword>
<keyword id="KW-0961">Cell wall biogenesis/degradation</keyword>
<keyword id="KW-0326">Glycosidase</keyword>
<keyword id="KW-0378">Hydrolase</keyword>
<keyword id="KW-0574">Periplasm</keyword>
<keyword id="KW-1185">Reference proteome</keyword>
<evidence type="ECO:0000250" key="1"/>
<evidence type="ECO:0000255" key="2"/>
<evidence type="ECO:0000256" key="3">
    <source>
        <dbReference type="SAM" id="MobiDB-lite"/>
    </source>
</evidence>
<evidence type="ECO:0000305" key="4"/>
<comment type="function">
    <text evidence="1">Flagellum-specific muramidase which hydrolyzes the peptidoglycan layer to assemble the rod structure in the periplasmic space.</text>
</comment>
<comment type="subcellular location">
    <subcellularLocation>
        <location evidence="1">Periplasm</location>
    </subcellularLocation>
</comment>
<comment type="miscellaneous">
    <text>Probably exported via the flagellum-specific export pathway.</text>
</comment>
<comment type="similarity">
    <text evidence="4">In the N-terminal section; belongs to the FlgJ family.</text>
</comment>
<comment type="similarity">
    <text evidence="4">In the C-terminal section; belongs to the glycosyl hydrolase 73 family.</text>
</comment>
<gene>
    <name type="primary">flgJ</name>
    <name type="ordered locus">PA1085</name>
</gene>